<sequence length="720" mass="78129">MFNKHSVEIDWGGRPLKLETGKIARQADGAVVATYGETVVLATVVAAKTPREGVDFLPLTVDYQEKTYAAGRIPGGYFKREGRPSEKETLVSRLIDRPVRPLFADGWRNETQVIVTVLSHDMENDPDVLAMVAASAALTLSGAPFRGPIGAARVGFMNDEYVLNPTLDEMVDTQLELVVAGTADAVLMVESEAKELSEDIMLGAVMFGHRHFQPVINAIIELAEKAAKEPREVSQADDSALEKEMLGLIEGELRPAYAIADKQQRQNAVAAAKAKVIAHYFPEGQEPKYDKLRIAAVFKHLEAKIVRWNILDTGKRIDGRDAKTVRNILAEVGVLPRAHGSALFTRGETQAMVVTTLGTGEDEQYIDALSGTYKETFLLHYNFPPYSVGETGRLGSTKRREIGHGKLAWRAIHPVLPPHHEFPYTIRVVSEITESNGSSSMASVCGASLSLMDAGVPLKRPTAGIAMGLILEGSRYAVLSDILGDEDHLGDMDFKVAGTEVGISSLQMDIKIAGITEEIMKVALAQAREGRIHILGEMAKALTNARAELGEYAPRIETFKIPTDKIREVIGTGGKVIREIVEKTGAKINIEDDGTVKVASNDGEAMKAAIKWIKSIASDPEVGQIYEGTVVKVMEFGAFVNFFGAKDGLVHISQLAANRVQKSSDIVKEGDKVKVKLLGFDDRGKTRLSMKAVDQQTGEDLEAAGHKAEKADAPREAAGE</sequence>
<name>PNP_NITHX</name>
<reference key="1">
    <citation type="submission" date="2006-03" db="EMBL/GenBank/DDBJ databases">
        <title>Complete sequence of chromosome of Nitrobacter hamburgensis X14.</title>
        <authorList>
            <consortium name="US DOE Joint Genome Institute"/>
            <person name="Copeland A."/>
            <person name="Lucas S."/>
            <person name="Lapidus A."/>
            <person name="Barry K."/>
            <person name="Detter J.C."/>
            <person name="Glavina del Rio T."/>
            <person name="Hammon N."/>
            <person name="Israni S."/>
            <person name="Dalin E."/>
            <person name="Tice H."/>
            <person name="Pitluck S."/>
            <person name="Chain P."/>
            <person name="Malfatti S."/>
            <person name="Shin M."/>
            <person name="Vergez L."/>
            <person name="Schmutz J."/>
            <person name="Larimer F."/>
            <person name="Land M."/>
            <person name="Hauser L."/>
            <person name="Kyrpides N."/>
            <person name="Ivanova N."/>
            <person name="Ward B."/>
            <person name="Arp D."/>
            <person name="Klotz M."/>
            <person name="Stein L."/>
            <person name="O'Mullan G."/>
            <person name="Starkenburg S."/>
            <person name="Sayavedra L."/>
            <person name="Poret-Peterson A.T."/>
            <person name="Gentry M.E."/>
            <person name="Bruce D."/>
            <person name="Richardson P."/>
        </authorList>
    </citation>
    <scope>NUCLEOTIDE SEQUENCE [LARGE SCALE GENOMIC DNA]</scope>
    <source>
        <strain>DSM 10229 / NCIMB 13809 / X14</strain>
    </source>
</reference>
<proteinExistence type="inferred from homology"/>
<protein>
    <recommendedName>
        <fullName evidence="1">Polyribonucleotide nucleotidyltransferase</fullName>
        <ecNumber evidence="1">2.7.7.8</ecNumber>
    </recommendedName>
    <alternativeName>
        <fullName evidence="1">Polynucleotide phosphorylase</fullName>
        <shortName evidence="1">PNPase</shortName>
    </alternativeName>
</protein>
<feature type="chain" id="PRO_0000329734" description="Polyribonucleotide nucleotidyltransferase">
    <location>
        <begin position="1"/>
        <end position="720"/>
    </location>
</feature>
<feature type="domain" description="KH" evidence="1">
    <location>
        <begin position="554"/>
        <end position="613"/>
    </location>
</feature>
<feature type="domain" description="S1 motif" evidence="1">
    <location>
        <begin position="623"/>
        <end position="691"/>
    </location>
</feature>
<feature type="region of interest" description="Disordered" evidence="2">
    <location>
        <begin position="691"/>
        <end position="720"/>
    </location>
</feature>
<feature type="compositionally biased region" description="Basic and acidic residues" evidence="2">
    <location>
        <begin position="703"/>
        <end position="720"/>
    </location>
</feature>
<feature type="binding site" evidence="1">
    <location>
        <position position="487"/>
    </location>
    <ligand>
        <name>Mg(2+)</name>
        <dbReference type="ChEBI" id="CHEBI:18420"/>
    </ligand>
</feature>
<feature type="binding site" evidence="1">
    <location>
        <position position="493"/>
    </location>
    <ligand>
        <name>Mg(2+)</name>
        <dbReference type="ChEBI" id="CHEBI:18420"/>
    </ligand>
</feature>
<gene>
    <name evidence="1" type="primary">pnp</name>
    <name type="ordered locus">Nham_0035</name>
</gene>
<accession>Q1QS60</accession>
<evidence type="ECO:0000255" key="1">
    <source>
        <dbReference type="HAMAP-Rule" id="MF_01595"/>
    </source>
</evidence>
<evidence type="ECO:0000256" key="2">
    <source>
        <dbReference type="SAM" id="MobiDB-lite"/>
    </source>
</evidence>
<evidence type="ECO:0000305" key="3"/>
<keyword id="KW-0963">Cytoplasm</keyword>
<keyword id="KW-0460">Magnesium</keyword>
<keyword id="KW-0479">Metal-binding</keyword>
<keyword id="KW-0548">Nucleotidyltransferase</keyword>
<keyword id="KW-1185">Reference proteome</keyword>
<keyword id="KW-0694">RNA-binding</keyword>
<keyword id="KW-0808">Transferase</keyword>
<comment type="function">
    <text evidence="1">Involved in mRNA degradation. Catalyzes the phosphorolysis of single-stranded polyribonucleotides processively in the 3'- to 5'-direction.</text>
</comment>
<comment type="catalytic activity">
    <reaction evidence="1">
        <text>RNA(n+1) + phosphate = RNA(n) + a ribonucleoside 5'-diphosphate</text>
        <dbReference type="Rhea" id="RHEA:22096"/>
        <dbReference type="Rhea" id="RHEA-COMP:14527"/>
        <dbReference type="Rhea" id="RHEA-COMP:17342"/>
        <dbReference type="ChEBI" id="CHEBI:43474"/>
        <dbReference type="ChEBI" id="CHEBI:57930"/>
        <dbReference type="ChEBI" id="CHEBI:140395"/>
        <dbReference type="EC" id="2.7.7.8"/>
    </reaction>
</comment>
<comment type="cofactor">
    <cofactor evidence="1">
        <name>Mg(2+)</name>
        <dbReference type="ChEBI" id="CHEBI:18420"/>
    </cofactor>
</comment>
<comment type="subcellular location">
    <subcellularLocation>
        <location evidence="1">Cytoplasm</location>
    </subcellularLocation>
</comment>
<comment type="similarity">
    <text evidence="1">Belongs to the polyribonucleotide nucleotidyltransferase family.</text>
</comment>
<comment type="sequence caution" evidence="3">
    <conflict type="erroneous initiation">
        <sequence resource="EMBL-CDS" id="ABE60937"/>
    </conflict>
</comment>
<organism>
    <name type="scientific">Nitrobacter hamburgensis (strain DSM 10229 / NCIMB 13809 / X14)</name>
    <dbReference type="NCBI Taxonomy" id="323097"/>
    <lineage>
        <taxon>Bacteria</taxon>
        <taxon>Pseudomonadati</taxon>
        <taxon>Pseudomonadota</taxon>
        <taxon>Alphaproteobacteria</taxon>
        <taxon>Hyphomicrobiales</taxon>
        <taxon>Nitrobacteraceae</taxon>
        <taxon>Nitrobacter</taxon>
    </lineage>
</organism>
<dbReference type="EC" id="2.7.7.8" evidence="1"/>
<dbReference type="EMBL" id="CP000319">
    <property type="protein sequence ID" value="ABE60937.1"/>
    <property type="status" value="ALT_INIT"/>
    <property type="molecule type" value="Genomic_DNA"/>
</dbReference>
<dbReference type="RefSeq" id="WP_041357504.1">
    <property type="nucleotide sequence ID" value="NC_007964.1"/>
</dbReference>
<dbReference type="SMR" id="Q1QS60"/>
<dbReference type="STRING" id="323097.Nham_0035"/>
<dbReference type="KEGG" id="nha:Nham_0035"/>
<dbReference type="eggNOG" id="COG1185">
    <property type="taxonomic scope" value="Bacteria"/>
</dbReference>
<dbReference type="HOGENOM" id="CLU_004217_2_2_5"/>
<dbReference type="OrthoDB" id="9804305at2"/>
<dbReference type="Proteomes" id="UP000001953">
    <property type="component" value="Chromosome"/>
</dbReference>
<dbReference type="GO" id="GO:0005829">
    <property type="term" value="C:cytosol"/>
    <property type="evidence" value="ECO:0007669"/>
    <property type="project" value="TreeGrafter"/>
</dbReference>
<dbReference type="GO" id="GO:0000175">
    <property type="term" value="F:3'-5'-RNA exonuclease activity"/>
    <property type="evidence" value="ECO:0007669"/>
    <property type="project" value="TreeGrafter"/>
</dbReference>
<dbReference type="GO" id="GO:0000287">
    <property type="term" value="F:magnesium ion binding"/>
    <property type="evidence" value="ECO:0007669"/>
    <property type="project" value="UniProtKB-UniRule"/>
</dbReference>
<dbReference type="GO" id="GO:0004654">
    <property type="term" value="F:polyribonucleotide nucleotidyltransferase activity"/>
    <property type="evidence" value="ECO:0007669"/>
    <property type="project" value="UniProtKB-UniRule"/>
</dbReference>
<dbReference type="GO" id="GO:0003723">
    <property type="term" value="F:RNA binding"/>
    <property type="evidence" value="ECO:0007669"/>
    <property type="project" value="UniProtKB-UniRule"/>
</dbReference>
<dbReference type="GO" id="GO:0006402">
    <property type="term" value="P:mRNA catabolic process"/>
    <property type="evidence" value="ECO:0007669"/>
    <property type="project" value="UniProtKB-UniRule"/>
</dbReference>
<dbReference type="GO" id="GO:0006396">
    <property type="term" value="P:RNA processing"/>
    <property type="evidence" value="ECO:0007669"/>
    <property type="project" value="InterPro"/>
</dbReference>
<dbReference type="CDD" id="cd02393">
    <property type="entry name" value="KH-I_PNPase"/>
    <property type="match status" value="1"/>
</dbReference>
<dbReference type="CDD" id="cd11363">
    <property type="entry name" value="RNase_PH_PNPase_1"/>
    <property type="match status" value="1"/>
</dbReference>
<dbReference type="CDD" id="cd11364">
    <property type="entry name" value="RNase_PH_PNPase_2"/>
    <property type="match status" value="1"/>
</dbReference>
<dbReference type="CDD" id="cd04472">
    <property type="entry name" value="S1_PNPase"/>
    <property type="match status" value="1"/>
</dbReference>
<dbReference type="FunFam" id="2.40.50.140:FF:000107">
    <property type="entry name" value="Polyribonucleotide nucleotidyltransferase"/>
    <property type="match status" value="1"/>
</dbReference>
<dbReference type="FunFam" id="3.30.1370.10:FF:000001">
    <property type="entry name" value="Polyribonucleotide nucleotidyltransferase"/>
    <property type="match status" value="1"/>
</dbReference>
<dbReference type="FunFam" id="3.30.230.70:FF:000001">
    <property type="entry name" value="Polyribonucleotide nucleotidyltransferase"/>
    <property type="match status" value="1"/>
</dbReference>
<dbReference type="FunFam" id="3.30.230.70:FF:000002">
    <property type="entry name" value="Polyribonucleotide nucleotidyltransferase"/>
    <property type="match status" value="1"/>
</dbReference>
<dbReference type="Gene3D" id="3.30.230.70">
    <property type="entry name" value="GHMP Kinase, N-terminal domain"/>
    <property type="match status" value="2"/>
</dbReference>
<dbReference type="Gene3D" id="3.30.1370.10">
    <property type="entry name" value="K Homology domain, type 1"/>
    <property type="match status" value="1"/>
</dbReference>
<dbReference type="Gene3D" id="2.40.50.140">
    <property type="entry name" value="Nucleic acid-binding proteins"/>
    <property type="match status" value="1"/>
</dbReference>
<dbReference type="HAMAP" id="MF_01595">
    <property type="entry name" value="PNPase"/>
    <property type="match status" value="1"/>
</dbReference>
<dbReference type="InterPro" id="IPR001247">
    <property type="entry name" value="ExoRNase_PH_dom1"/>
</dbReference>
<dbReference type="InterPro" id="IPR015847">
    <property type="entry name" value="ExoRNase_PH_dom2"/>
</dbReference>
<dbReference type="InterPro" id="IPR036345">
    <property type="entry name" value="ExoRNase_PH_dom2_sf"/>
</dbReference>
<dbReference type="InterPro" id="IPR004087">
    <property type="entry name" value="KH_dom"/>
</dbReference>
<dbReference type="InterPro" id="IPR004088">
    <property type="entry name" value="KH_dom_type_1"/>
</dbReference>
<dbReference type="InterPro" id="IPR036612">
    <property type="entry name" value="KH_dom_type_1_sf"/>
</dbReference>
<dbReference type="InterPro" id="IPR012340">
    <property type="entry name" value="NA-bd_OB-fold"/>
</dbReference>
<dbReference type="InterPro" id="IPR012162">
    <property type="entry name" value="PNPase"/>
</dbReference>
<dbReference type="InterPro" id="IPR027408">
    <property type="entry name" value="PNPase/RNase_PH_dom_sf"/>
</dbReference>
<dbReference type="InterPro" id="IPR015848">
    <property type="entry name" value="PNPase_PH_RNA-bd_bac/org-type"/>
</dbReference>
<dbReference type="InterPro" id="IPR036456">
    <property type="entry name" value="PNPase_PH_RNA-bd_sf"/>
</dbReference>
<dbReference type="InterPro" id="IPR020568">
    <property type="entry name" value="Ribosomal_Su5_D2-typ_SF"/>
</dbReference>
<dbReference type="InterPro" id="IPR003029">
    <property type="entry name" value="S1_domain"/>
</dbReference>
<dbReference type="NCBIfam" id="TIGR03591">
    <property type="entry name" value="polynuc_phos"/>
    <property type="match status" value="1"/>
</dbReference>
<dbReference type="NCBIfam" id="NF008805">
    <property type="entry name" value="PRK11824.1"/>
    <property type="match status" value="1"/>
</dbReference>
<dbReference type="PANTHER" id="PTHR11252">
    <property type="entry name" value="POLYRIBONUCLEOTIDE NUCLEOTIDYLTRANSFERASE"/>
    <property type="match status" value="1"/>
</dbReference>
<dbReference type="PANTHER" id="PTHR11252:SF0">
    <property type="entry name" value="POLYRIBONUCLEOTIDE NUCLEOTIDYLTRANSFERASE 1, MITOCHONDRIAL"/>
    <property type="match status" value="1"/>
</dbReference>
<dbReference type="Pfam" id="PF00013">
    <property type="entry name" value="KH_1"/>
    <property type="match status" value="1"/>
</dbReference>
<dbReference type="Pfam" id="PF03726">
    <property type="entry name" value="PNPase"/>
    <property type="match status" value="1"/>
</dbReference>
<dbReference type="Pfam" id="PF01138">
    <property type="entry name" value="RNase_PH"/>
    <property type="match status" value="2"/>
</dbReference>
<dbReference type="Pfam" id="PF03725">
    <property type="entry name" value="RNase_PH_C"/>
    <property type="match status" value="1"/>
</dbReference>
<dbReference type="Pfam" id="PF00575">
    <property type="entry name" value="S1"/>
    <property type="match status" value="1"/>
</dbReference>
<dbReference type="PIRSF" id="PIRSF005499">
    <property type="entry name" value="PNPase"/>
    <property type="match status" value="1"/>
</dbReference>
<dbReference type="SMART" id="SM00322">
    <property type="entry name" value="KH"/>
    <property type="match status" value="1"/>
</dbReference>
<dbReference type="SMART" id="SM00316">
    <property type="entry name" value="S1"/>
    <property type="match status" value="1"/>
</dbReference>
<dbReference type="SUPFAM" id="SSF54791">
    <property type="entry name" value="Eukaryotic type KH-domain (KH-domain type I)"/>
    <property type="match status" value="1"/>
</dbReference>
<dbReference type="SUPFAM" id="SSF50249">
    <property type="entry name" value="Nucleic acid-binding proteins"/>
    <property type="match status" value="1"/>
</dbReference>
<dbReference type="SUPFAM" id="SSF46915">
    <property type="entry name" value="Polynucleotide phosphorylase/guanosine pentaphosphate synthase (PNPase/GPSI), domain 3"/>
    <property type="match status" value="1"/>
</dbReference>
<dbReference type="SUPFAM" id="SSF55666">
    <property type="entry name" value="Ribonuclease PH domain 2-like"/>
    <property type="match status" value="2"/>
</dbReference>
<dbReference type="SUPFAM" id="SSF54211">
    <property type="entry name" value="Ribosomal protein S5 domain 2-like"/>
    <property type="match status" value="2"/>
</dbReference>
<dbReference type="PROSITE" id="PS50084">
    <property type="entry name" value="KH_TYPE_1"/>
    <property type="match status" value="1"/>
</dbReference>
<dbReference type="PROSITE" id="PS50126">
    <property type="entry name" value="S1"/>
    <property type="match status" value="1"/>
</dbReference>